<sequence>MYAIISVGNRQYKVTQDQEFLTEKTGKNAGESFDAKVLLFAESNNKVHIGQPELKTARVSLKVLEDVKGDKIHGYVYKRRKNYQKAWGHRQQLQKVKVVSLSAV</sequence>
<name>RL21_LEPIC</name>
<gene>
    <name evidence="1" type="primary">rplU</name>
    <name type="ordered locus">LIC_12776</name>
</gene>
<proteinExistence type="inferred from homology"/>
<reference key="1">
    <citation type="journal article" date="2004" name="J. Bacteriol.">
        <title>Comparative genomics of two Leptospira interrogans serovars reveals novel insights into physiology and pathogenesis.</title>
        <authorList>
            <person name="Nascimento A.L.T.O."/>
            <person name="Ko A.I."/>
            <person name="Martins E.A.L."/>
            <person name="Monteiro-Vitorello C.B."/>
            <person name="Ho P.L."/>
            <person name="Haake D.A."/>
            <person name="Verjovski-Almeida S."/>
            <person name="Hartskeerl R.A."/>
            <person name="Marques M.V."/>
            <person name="Oliveira M.C."/>
            <person name="Menck C.F.M."/>
            <person name="Leite L.C.C."/>
            <person name="Carrer H."/>
            <person name="Coutinho L.L."/>
            <person name="Degrave W.M."/>
            <person name="Dellagostin O.A."/>
            <person name="El-Dorry H."/>
            <person name="Ferro E.S."/>
            <person name="Ferro M.I.T."/>
            <person name="Furlan L.R."/>
            <person name="Gamberini M."/>
            <person name="Giglioti E.A."/>
            <person name="Goes-Neto A."/>
            <person name="Goldman G.H."/>
            <person name="Goldman M.H.S."/>
            <person name="Harakava R."/>
            <person name="Jeronimo S.M.B."/>
            <person name="Junqueira-de-Azevedo I.L.M."/>
            <person name="Kimura E.T."/>
            <person name="Kuramae E.E."/>
            <person name="Lemos E.G.M."/>
            <person name="Lemos M.V.F."/>
            <person name="Marino C.L."/>
            <person name="Nunes L.R."/>
            <person name="de Oliveira R.C."/>
            <person name="Pereira G.G."/>
            <person name="Reis M.S."/>
            <person name="Schriefer A."/>
            <person name="Siqueira W.J."/>
            <person name="Sommer P."/>
            <person name="Tsai S.M."/>
            <person name="Simpson A.J.G."/>
            <person name="Ferro J.A."/>
            <person name="Camargo L.E.A."/>
            <person name="Kitajima J.P."/>
            <person name="Setubal J.C."/>
            <person name="Van Sluys M.A."/>
        </authorList>
    </citation>
    <scope>NUCLEOTIDE SEQUENCE [LARGE SCALE GENOMIC DNA]</scope>
    <source>
        <strain>Fiocruz L1-130</strain>
    </source>
</reference>
<feature type="chain" id="PRO_0000270682" description="Large ribosomal subunit protein bL21">
    <location>
        <begin position="1"/>
        <end position="104"/>
    </location>
</feature>
<dbReference type="EMBL" id="AE016823">
    <property type="protein sequence ID" value="AAS71332.1"/>
    <property type="molecule type" value="Genomic_DNA"/>
</dbReference>
<dbReference type="RefSeq" id="WP_000270913.1">
    <property type="nucleotide sequence ID" value="NC_005823.1"/>
</dbReference>
<dbReference type="SMR" id="Q72NQ4"/>
<dbReference type="GeneID" id="61142654"/>
<dbReference type="KEGG" id="lic:LIC_12776"/>
<dbReference type="HOGENOM" id="CLU_061463_3_2_12"/>
<dbReference type="Proteomes" id="UP000007037">
    <property type="component" value="Chromosome I"/>
</dbReference>
<dbReference type="GO" id="GO:0005737">
    <property type="term" value="C:cytoplasm"/>
    <property type="evidence" value="ECO:0007669"/>
    <property type="project" value="UniProtKB-ARBA"/>
</dbReference>
<dbReference type="GO" id="GO:1990904">
    <property type="term" value="C:ribonucleoprotein complex"/>
    <property type="evidence" value="ECO:0007669"/>
    <property type="project" value="UniProtKB-KW"/>
</dbReference>
<dbReference type="GO" id="GO:0005840">
    <property type="term" value="C:ribosome"/>
    <property type="evidence" value="ECO:0007669"/>
    <property type="project" value="UniProtKB-KW"/>
</dbReference>
<dbReference type="GO" id="GO:0019843">
    <property type="term" value="F:rRNA binding"/>
    <property type="evidence" value="ECO:0007669"/>
    <property type="project" value="UniProtKB-UniRule"/>
</dbReference>
<dbReference type="GO" id="GO:0003735">
    <property type="term" value="F:structural constituent of ribosome"/>
    <property type="evidence" value="ECO:0007669"/>
    <property type="project" value="InterPro"/>
</dbReference>
<dbReference type="GO" id="GO:0006412">
    <property type="term" value="P:translation"/>
    <property type="evidence" value="ECO:0007669"/>
    <property type="project" value="UniProtKB-UniRule"/>
</dbReference>
<dbReference type="HAMAP" id="MF_01363">
    <property type="entry name" value="Ribosomal_bL21"/>
    <property type="match status" value="1"/>
</dbReference>
<dbReference type="InterPro" id="IPR028909">
    <property type="entry name" value="bL21-like"/>
</dbReference>
<dbReference type="InterPro" id="IPR036164">
    <property type="entry name" value="bL21-like_sf"/>
</dbReference>
<dbReference type="InterPro" id="IPR001787">
    <property type="entry name" value="Ribosomal_bL21"/>
</dbReference>
<dbReference type="NCBIfam" id="TIGR00061">
    <property type="entry name" value="L21"/>
    <property type="match status" value="1"/>
</dbReference>
<dbReference type="PANTHER" id="PTHR21349">
    <property type="entry name" value="50S RIBOSOMAL PROTEIN L21"/>
    <property type="match status" value="1"/>
</dbReference>
<dbReference type="PANTHER" id="PTHR21349:SF0">
    <property type="entry name" value="LARGE RIBOSOMAL SUBUNIT PROTEIN BL21M"/>
    <property type="match status" value="1"/>
</dbReference>
<dbReference type="Pfam" id="PF00829">
    <property type="entry name" value="Ribosomal_L21p"/>
    <property type="match status" value="1"/>
</dbReference>
<dbReference type="SUPFAM" id="SSF141091">
    <property type="entry name" value="L21p-like"/>
    <property type="match status" value="1"/>
</dbReference>
<organism>
    <name type="scientific">Leptospira interrogans serogroup Icterohaemorrhagiae serovar copenhageni (strain Fiocruz L1-130)</name>
    <dbReference type="NCBI Taxonomy" id="267671"/>
    <lineage>
        <taxon>Bacteria</taxon>
        <taxon>Pseudomonadati</taxon>
        <taxon>Spirochaetota</taxon>
        <taxon>Spirochaetia</taxon>
        <taxon>Leptospirales</taxon>
        <taxon>Leptospiraceae</taxon>
        <taxon>Leptospira</taxon>
    </lineage>
</organism>
<comment type="function">
    <text evidence="1">This protein binds to 23S rRNA in the presence of protein L20.</text>
</comment>
<comment type="subunit">
    <text evidence="1">Part of the 50S ribosomal subunit. Contacts protein L20.</text>
</comment>
<comment type="similarity">
    <text evidence="1">Belongs to the bacterial ribosomal protein bL21 family.</text>
</comment>
<accession>Q72NQ4</accession>
<keyword id="KW-0687">Ribonucleoprotein</keyword>
<keyword id="KW-0689">Ribosomal protein</keyword>
<keyword id="KW-0694">RNA-binding</keyword>
<keyword id="KW-0699">rRNA-binding</keyword>
<evidence type="ECO:0000255" key="1">
    <source>
        <dbReference type="HAMAP-Rule" id="MF_01363"/>
    </source>
</evidence>
<evidence type="ECO:0000305" key="2"/>
<protein>
    <recommendedName>
        <fullName evidence="1">Large ribosomal subunit protein bL21</fullName>
    </recommendedName>
    <alternativeName>
        <fullName evidence="2">50S ribosomal protein L21</fullName>
    </alternativeName>
</protein>